<gene>
    <name evidence="1" type="primary">CLU1</name>
    <name evidence="1" type="synonym">TIF31</name>
    <name type="ordered locus">YALI0B18810g</name>
</gene>
<sequence length="1181" mass="130611">MTSEQEEVSILTLQVTFPDPELPPLSLTVSPEESVQEIRNYIRDAFVQERCITSFTLNLNGQPIDGFESLAEIEGLESGATIELTNAPYNEHEARLHVIRVRELAGFSNNSHAAVGQDAGMTAFNRTEGIDKTPKDYMQEVVETKAQKEAKAKLKAEQKKAKAAAKAEALAKNEEVSEDEESEPEDDTPMKQSTQVLEENSPMHGFKLEESKSLQELFPDRQNLPAPALLSLHLSHWNPPTQAQQLNGELLYLQCATLEGESYQIVAHTNGFYVANSTLGSFDPSPKPLMVKTKAKKQNGGKKGGKKTETEISYVPITTENMHHSLYDLLVSLSDKFAKKIASNYAELNAAGMLSVVPPTNCFLANPWLTKPAGFRRPDMARNQELLSLKNLEGQDDTREWSEDLQSLKELPRETINDRVVRERHLNKTYFDFTEAAVAGAVQVVHGEIQPINPSEPEASHIFLHKGIFYSVGADGSGTYAEIGGDEAARVASAKDLQAVQQLVQFDFPEIASLCTTVVDYQGKRIVCQSPVPGIFRQPENAPPQVKYGSVEGAEEIASEQEFGDAFKPIAAAFRLKTHTVKDANKEHSLHLASDCKGLAGTDGRKYLLDLYRLAPVDIAFLDANPSYPHQLALLRFEAVEAYFRHQVRAEIKKQSLDEDETPKFEVEPFYLNPDAFVLPAPKEDEDAVRAASEFVSNTIIPEHVEAVIAGFGTTPIDGQQLTQSLHGKGIPMRHLASVIAAAKKSDTSKAQFLAELCEQEIAVRSAKHLLRNEMAKKGANPKYVVAHVMNLLLGSTSKVFDTPAGLLAVSDSVNLSVDEAKAAVAAIAKTRFGYDLDTSIFAKRPVQLLRELSGKLGLQFLQKEYEFGAEPFAVADVVNILPVFKTTTFRSKLVEEALEAARNSVNTDKDVALQLLRESIPLAEQVYGSVNPELTKVYNTASYLAYEMDEALLAADLGRRACIMSERCSGIDSVDAILNYLNLSLFEHAIGNYVGALHMIKHAVSVWVTVCGTHLHPDIITSLSNAITMLTTLKRWNESRQWLEKTIVITESVANEKAQAPLRFQLAQTMCHEQQYKEATDELRRALKLFNAHYGEDDQNTKDCAVWLKSLTQAAVSIQRQKLWEQEQGRLARQAPKPTATHQKEAPKKASKKTKGKGKGKDDKGEKLVAELKKKKAGKR</sequence>
<reference key="1">
    <citation type="journal article" date="2004" name="Nature">
        <title>Genome evolution in yeasts.</title>
        <authorList>
            <person name="Dujon B."/>
            <person name="Sherman D."/>
            <person name="Fischer G."/>
            <person name="Durrens P."/>
            <person name="Casaregola S."/>
            <person name="Lafontaine I."/>
            <person name="de Montigny J."/>
            <person name="Marck C."/>
            <person name="Neuveglise C."/>
            <person name="Talla E."/>
            <person name="Goffard N."/>
            <person name="Frangeul L."/>
            <person name="Aigle M."/>
            <person name="Anthouard V."/>
            <person name="Babour A."/>
            <person name="Barbe V."/>
            <person name="Barnay S."/>
            <person name="Blanchin S."/>
            <person name="Beckerich J.-M."/>
            <person name="Beyne E."/>
            <person name="Bleykasten C."/>
            <person name="Boisrame A."/>
            <person name="Boyer J."/>
            <person name="Cattolico L."/>
            <person name="Confanioleri F."/>
            <person name="de Daruvar A."/>
            <person name="Despons L."/>
            <person name="Fabre E."/>
            <person name="Fairhead C."/>
            <person name="Ferry-Dumazet H."/>
            <person name="Groppi A."/>
            <person name="Hantraye F."/>
            <person name="Hennequin C."/>
            <person name="Jauniaux N."/>
            <person name="Joyet P."/>
            <person name="Kachouri R."/>
            <person name="Kerrest A."/>
            <person name="Koszul R."/>
            <person name="Lemaire M."/>
            <person name="Lesur I."/>
            <person name="Ma L."/>
            <person name="Muller H."/>
            <person name="Nicaud J.-M."/>
            <person name="Nikolski M."/>
            <person name="Oztas S."/>
            <person name="Ozier-Kalogeropoulos O."/>
            <person name="Pellenz S."/>
            <person name="Potier S."/>
            <person name="Richard G.-F."/>
            <person name="Straub M.-L."/>
            <person name="Suleau A."/>
            <person name="Swennen D."/>
            <person name="Tekaia F."/>
            <person name="Wesolowski-Louvel M."/>
            <person name="Westhof E."/>
            <person name="Wirth B."/>
            <person name="Zeniou-Meyer M."/>
            <person name="Zivanovic Y."/>
            <person name="Bolotin-Fukuhara M."/>
            <person name="Thierry A."/>
            <person name="Bouchier C."/>
            <person name="Caudron B."/>
            <person name="Scarpelli C."/>
            <person name="Gaillardin C."/>
            <person name="Weissenbach J."/>
            <person name="Wincker P."/>
            <person name="Souciet J.-L."/>
        </authorList>
    </citation>
    <scope>NUCLEOTIDE SEQUENCE [LARGE SCALE GENOMIC DNA]</scope>
    <source>
        <strain>CLIB 122 / E 150</strain>
    </source>
</reference>
<accession>Q6CE38</accession>
<proteinExistence type="inferred from homology"/>
<evidence type="ECO:0000255" key="1">
    <source>
        <dbReference type="HAMAP-Rule" id="MF_03013"/>
    </source>
</evidence>
<evidence type="ECO:0000255" key="2">
    <source>
        <dbReference type="PROSITE-ProRule" id="PRU01167"/>
    </source>
</evidence>
<evidence type="ECO:0000256" key="3">
    <source>
        <dbReference type="SAM" id="MobiDB-lite"/>
    </source>
</evidence>
<dbReference type="EMBL" id="CR382128">
    <property type="protein sequence ID" value="CAG83327.1"/>
    <property type="molecule type" value="Genomic_DNA"/>
</dbReference>
<dbReference type="RefSeq" id="XP_501074.1">
    <property type="nucleotide sequence ID" value="XM_501074.1"/>
</dbReference>
<dbReference type="SMR" id="Q6CE38"/>
<dbReference type="FunCoup" id="Q6CE38">
    <property type="interactions" value="1025"/>
</dbReference>
<dbReference type="STRING" id="284591.Q6CE38"/>
<dbReference type="EnsemblFungi" id="CAG83327">
    <property type="protein sequence ID" value="CAG83327"/>
    <property type="gene ID" value="YALI0_B18810g"/>
</dbReference>
<dbReference type="KEGG" id="yli:2906886"/>
<dbReference type="VEuPathDB" id="FungiDB:YALI0_B18810g"/>
<dbReference type="HOGENOM" id="CLU_003256_2_0_1"/>
<dbReference type="InParanoid" id="Q6CE38"/>
<dbReference type="OMA" id="HPVWDKD"/>
<dbReference type="OrthoDB" id="10131at4891"/>
<dbReference type="Proteomes" id="UP000001300">
    <property type="component" value="Chromosome B"/>
</dbReference>
<dbReference type="GO" id="GO:0005737">
    <property type="term" value="C:cytoplasm"/>
    <property type="evidence" value="ECO:0000318"/>
    <property type="project" value="GO_Central"/>
</dbReference>
<dbReference type="GO" id="GO:0003729">
    <property type="term" value="F:mRNA binding"/>
    <property type="evidence" value="ECO:0000318"/>
    <property type="project" value="GO_Central"/>
</dbReference>
<dbReference type="GO" id="GO:0048312">
    <property type="term" value="P:intracellular distribution of mitochondria"/>
    <property type="evidence" value="ECO:0000318"/>
    <property type="project" value="GO_Central"/>
</dbReference>
<dbReference type="GO" id="GO:0007005">
    <property type="term" value="P:mitochondrion organization"/>
    <property type="evidence" value="ECO:0007669"/>
    <property type="project" value="UniProtKB-UniRule"/>
</dbReference>
<dbReference type="CDD" id="cd15466">
    <property type="entry name" value="CLU-central"/>
    <property type="match status" value="1"/>
</dbReference>
<dbReference type="Gene3D" id="3.30.2280.10">
    <property type="entry name" value="Hypothetical protein (hspc210)"/>
    <property type="match status" value="1"/>
</dbReference>
<dbReference type="Gene3D" id="1.25.40.10">
    <property type="entry name" value="Tetratricopeptide repeat domain"/>
    <property type="match status" value="2"/>
</dbReference>
<dbReference type="HAMAP" id="MF_03013">
    <property type="entry name" value="CLU"/>
    <property type="match status" value="1"/>
</dbReference>
<dbReference type="InterPro" id="IPR033646">
    <property type="entry name" value="CLU-central"/>
</dbReference>
<dbReference type="InterPro" id="IPR025697">
    <property type="entry name" value="CLU_dom"/>
</dbReference>
<dbReference type="InterPro" id="IPR028275">
    <property type="entry name" value="CLU_N"/>
</dbReference>
<dbReference type="InterPro" id="IPR027523">
    <property type="entry name" value="CLU_prot"/>
</dbReference>
<dbReference type="InterPro" id="IPR023231">
    <property type="entry name" value="GSKIP_dom_sf"/>
</dbReference>
<dbReference type="InterPro" id="IPR011990">
    <property type="entry name" value="TPR-like_helical_dom_sf"/>
</dbReference>
<dbReference type="PANTHER" id="PTHR12601:SF6">
    <property type="entry name" value="CLUSTERED MITOCHONDRIA PROTEIN HOMOLOG"/>
    <property type="match status" value="1"/>
</dbReference>
<dbReference type="PANTHER" id="PTHR12601">
    <property type="entry name" value="EUKARYOTIC TRANSLATION INITIATION FACTOR 3 SUBUNIT EIF-3"/>
    <property type="match status" value="1"/>
</dbReference>
<dbReference type="Pfam" id="PF13236">
    <property type="entry name" value="CLU"/>
    <property type="match status" value="1"/>
</dbReference>
<dbReference type="Pfam" id="PF15044">
    <property type="entry name" value="CLU_N"/>
    <property type="match status" value="1"/>
</dbReference>
<dbReference type="Pfam" id="PF12807">
    <property type="entry name" value="eIF3_p135"/>
    <property type="match status" value="1"/>
</dbReference>
<dbReference type="SUPFAM" id="SSF103107">
    <property type="entry name" value="Hypothetical protein c14orf129, hspc210"/>
    <property type="match status" value="1"/>
</dbReference>
<dbReference type="SUPFAM" id="SSF48452">
    <property type="entry name" value="TPR-like"/>
    <property type="match status" value="1"/>
</dbReference>
<dbReference type="PROSITE" id="PS51823">
    <property type="entry name" value="CLU"/>
    <property type="match status" value="1"/>
</dbReference>
<protein>
    <recommendedName>
        <fullName evidence="1">Clustered mitochondria protein homolog</fullName>
    </recommendedName>
    <alternativeName>
        <fullName evidence="1">Protein TIF31 homolog</fullName>
    </alternativeName>
</protein>
<organism>
    <name type="scientific">Yarrowia lipolytica (strain CLIB 122 / E 150)</name>
    <name type="common">Yeast</name>
    <name type="synonym">Candida lipolytica</name>
    <dbReference type="NCBI Taxonomy" id="284591"/>
    <lineage>
        <taxon>Eukaryota</taxon>
        <taxon>Fungi</taxon>
        <taxon>Dikarya</taxon>
        <taxon>Ascomycota</taxon>
        <taxon>Saccharomycotina</taxon>
        <taxon>Dipodascomycetes</taxon>
        <taxon>Dipodascales</taxon>
        <taxon>Dipodascales incertae sedis</taxon>
        <taxon>Yarrowia</taxon>
    </lineage>
</organism>
<name>CLU_YARLI</name>
<comment type="function">
    <text evidence="1">mRNA-binding protein involved in proper cytoplasmic distribution of mitochondria.</text>
</comment>
<comment type="subunit">
    <text evidence="1">May associate with the eukaryotic translation initiation factor 3 (eIF-3) complex.</text>
</comment>
<comment type="subcellular location">
    <subcellularLocation>
        <location evidence="1">Cytoplasm</location>
    </subcellularLocation>
</comment>
<comment type="similarity">
    <text evidence="1">Belongs to the CLU family.</text>
</comment>
<feature type="chain" id="PRO_0000366417" description="Clustered mitochondria protein homolog">
    <location>
        <begin position="1"/>
        <end position="1181"/>
    </location>
</feature>
<feature type="domain" description="Clu" evidence="2">
    <location>
        <begin position="379"/>
        <end position="622"/>
    </location>
</feature>
<feature type="region of interest" description="Disordered" evidence="3">
    <location>
        <begin position="165"/>
        <end position="195"/>
    </location>
</feature>
<feature type="region of interest" description="Disordered" evidence="3">
    <location>
        <begin position="1130"/>
        <end position="1181"/>
    </location>
</feature>
<feature type="compositionally biased region" description="Acidic residues" evidence="3">
    <location>
        <begin position="176"/>
        <end position="187"/>
    </location>
</feature>
<feature type="compositionally biased region" description="Basic residues" evidence="3">
    <location>
        <begin position="1150"/>
        <end position="1159"/>
    </location>
</feature>
<feature type="compositionally biased region" description="Basic and acidic residues" evidence="3">
    <location>
        <begin position="1160"/>
        <end position="1173"/>
    </location>
</feature>
<keyword id="KW-0963">Cytoplasm</keyword>
<keyword id="KW-1185">Reference proteome</keyword>